<dbReference type="EC" id="1.14.99.60" evidence="1"/>
<dbReference type="EMBL" id="CP000050">
    <property type="protein sequence ID" value="AAY47570.1"/>
    <property type="molecule type" value="Genomic_DNA"/>
</dbReference>
<dbReference type="RefSeq" id="WP_011035727.1">
    <property type="nucleotide sequence ID" value="NZ_CP155948.1"/>
</dbReference>
<dbReference type="SMR" id="Q4UZF3"/>
<dbReference type="GeneID" id="58011787"/>
<dbReference type="KEGG" id="xcb:XC_0489"/>
<dbReference type="HOGENOM" id="CLU_088601_0_0_6"/>
<dbReference type="BioCyc" id="MetaCyc:MONOMER-21242"/>
<dbReference type="UniPathway" id="UPA00232"/>
<dbReference type="Proteomes" id="UP000000420">
    <property type="component" value="Chromosome"/>
</dbReference>
<dbReference type="GO" id="GO:0005886">
    <property type="term" value="C:plasma membrane"/>
    <property type="evidence" value="ECO:0007669"/>
    <property type="project" value="UniProtKB-SubCell"/>
</dbReference>
<dbReference type="GO" id="GO:0008682">
    <property type="term" value="F:3-demethoxyubiquinol 3-hydroxylase activity"/>
    <property type="evidence" value="ECO:0007669"/>
    <property type="project" value="UniProtKB-EC"/>
</dbReference>
<dbReference type="GO" id="GO:0046872">
    <property type="term" value="F:metal ion binding"/>
    <property type="evidence" value="ECO:0007669"/>
    <property type="project" value="UniProtKB-KW"/>
</dbReference>
<dbReference type="GO" id="GO:0006744">
    <property type="term" value="P:ubiquinone biosynthetic process"/>
    <property type="evidence" value="ECO:0007669"/>
    <property type="project" value="UniProtKB-UniRule"/>
</dbReference>
<dbReference type="CDD" id="cd01042">
    <property type="entry name" value="DMQH"/>
    <property type="match status" value="1"/>
</dbReference>
<dbReference type="FunFam" id="1.20.1260.10:FF:000013">
    <property type="entry name" value="2-nonaprenyl-3-methyl-6-methoxy-1,4-benzoquinol hydroxylase"/>
    <property type="match status" value="1"/>
</dbReference>
<dbReference type="Gene3D" id="1.20.1260.10">
    <property type="match status" value="1"/>
</dbReference>
<dbReference type="HAMAP" id="MF_01658">
    <property type="entry name" value="COQ7"/>
    <property type="match status" value="1"/>
</dbReference>
<dbReference type="InterPro" id="IPR047809">
    <property type="entry name" value="COQ7_proteobact"/>
</dbReference>
<dbReference type="InterPro" id="IPR012347">
    <property type="entry name" value="Ferritin-like"/>
</dbReference>
<dbReference type="InterPro" id="IPR009078">
    <property type="entry name" value="Ferritin-like_SF"/>
</dbReference>
<dbReference type="InterPro" id="IPR011566">
    <property type="entry name" value="Ubq_synth_Coq7"/>
</dbReference>
<dbReference type="NCBIfam" id="NF033656">
    <property type="entry name" value="DMQ_monoox_COQ7"/>
    <property type="match status" value="1"/>
</dbReference>
<dbReference type="PANTHER" id="PTHR11237:SF4">
    <property type="entry name" value="5-DEMETHOXYUBIQUINONE HYDROXYLASE, MITOCHONDRIAL"/>
    <property type="match status" value="1"/>
</dbReference>
<dbReference type="PANTHER" id="PTHR11237">
    <property type="entry name" value="COENZYME Q10 BIOSYNTHESIS PROTEIN 7"/>
    <property type="match status" value="1"/>
</dbReference>
<dbReference type="Pfam" id="PF03232">
    <property type="entry name" value="COQ7"/>
    <property type="match status" value="1"/>
</dbReference>
<dbReference type="SUPFAM" id="SSF47240">
    <property type="entry name" value="Ferritin-like"/>
    <property type="match status" value="1"/>
</dbReference>
<gene>
    <name evidence="1" type="primary">coq7</name>
    <name type="ordered locus">XC_0489</name>
</gene>
<comment type="function">
    <text evidence="1">Catalyzes the hydroxylation of 2-nonaprenyl-3-methyl-6-methoxy-1,4-benzoquinol during ubiquinone biosynthesis.</text>
</comment>
<comment type="catalytic activity">
    <reaction evidence="1">
        <text>a 5-methoxy-2-methyl-3-(all-trans-polyprenyl)benzene-1,4-diol + AH2 + O2 = a 3-demethylubiquinol + A + H2O</text>
        <dbReference type="Rhea" id="RHEA:50908"/>
        <dbReference type="Rhea" id="RHEA-COMP:10859"/>
        <dbReference type="Rhea" id="RHEA-COMP:10914"/>
        <dbReference type="ChEBI" id="CHEBI:13193"/>
        <dbReference type="ChEBI" id="CHEBI:15377"/>
        <dbReference type="ChEBI" id="CHEBI:15379"/>
        <dbReference type="ChEBI" id="CHEBI:17499"/>
        <dbReference type="ChEBI" id="CHEBI:84167"/>
        <dbReference type="ChEBI" id="CHEBI:84422"/>
        <dbReference type="EC" id="1.14.99.60"/>
    </reaction>
</comment>
<comment type="cofactor">
    <cofactor evidence="1">
        <name>Fe cation</name>
        <dbReference type="ChEBI" id="CHEBI:24875"/>
    </cofactor>
    <text evidence="1">Binds 2 iron ions per subunit.</text>
</comment>
<comment type="pathway">
    <text evidence="1">Cofactor biosynthesis; ubiquinone biosynthesis.</text>
</comment>
<comment type="subcellular location">
    <subcellularLocation>
        <location evidence="1">Cell membrane</location>
        <topology evidence="1">Peripheral membrane protein</topology>
    </subcellularLocation>
</comment>
<comment type="similarity">
    <text evidence="1">Belongs to the COQ7 family.</text>
</comment>
<feature type="chain" id="PRO_0000338735" description="3-demethoxyubiquinol 3-hydroxylase">
    <location>
        <begin position="1"/>
        <end position="217"/>
    </location>
</feature>
<feature type="binding site" evidence="1">
    <location>
        <position position="66"/>
    </location>
    <ligand>
        <name>Fe cation</name>
        <dbReference type="ChEBI" id="CHEBI:24875"/>
        <label>1</label>
    </ligand>
</feature>
<feature type="binding site" evidence="1">
    <location>
        <position position="96"/>
    </location>
    <ligand>
        <name>Fe cation</name>
        <dbReference type="ChEBI" id="CHEBI:24875"/>
        <label>1</label>
    </ligand>
</feature>
<feature type="binding site" evidence="1">
    <location>
        <position position="96"/>
    </location>
    <ligand>
        <name>Fe cation</name>
        <dbReference type="ChEBI" id="CHEBI:24875"/>
        <label>2</label>
    </ligand>
</feature>
<feature type="binding site" evidence="1">
    <location>
        <position position="99"/>
    </location>
    <ligand>
        <name>Fe cation</name>
        <dbReference type="ChEBI" id="CHEBI:24875"/>
        <label>1</label>
    </ligand>
</feature>
<feature type="binding site" evidence="1">
    <location>
        <position position="148"/>
    </location>
    <ligand>
        <name>Fe cation</name>
        <dbReference type="ChEBI" id="CHEBI:24875"/>
        <label>2</label>
    </ligand>
</feature>
<feature type="binding site" evidence="1">
    <location>
        <position position="180"/>
    </location>
    <ligand>
        <name>Fe cation</name>
        <dbReference type="ChEBI" id="CHEBI:24875"/>
        <label>1</label>
    </ligand>
</feature>
<feature type="binding site" evidence="1">
    <location>
        <position position="180"/>
    </location>
    <ligand>
        <name>Fe cation</name>
        <dbReference type="ChEBI" id="CHEBI:24875"/>
        <label>2</label>
    </ligand>
</feature>
<feature type="binding site" evidence="1">
    <location>
        <position position="183"/>
    </location>
    <ligand>
        <name>Fe cation</name>
        <dbReference type="ChEBI" id="CHEBI:24875"/>
        <label>2</label>
    </ligand>
</feature>
<evidence type="ECO:0000255" key="1">
    <source>
        <dbReference type="HAMAP-Rule" id="MF_01658"/>
    </source>
</evidence>
<reference key="1">
    <citation type="journal article" date="2005" name="Genome Res.">
        <title>Comparative and functional genomic analyses of the pathogenicity of phytopathogen Xanthomonas campestris pv. campestris.</title>
        <authorList>
            <person name="Qian W."/>
            <person name="Jia Y."/>
            <person name="Ren S.-X."/>
            <person name="He Y.-Q."/>
            <person name="Feng J.-X."/>
            <person name="Lu L.-F."/>
            <person name="Sun Q."/>
            <person name="Ying G."/>
            <person name="Tang D.-J."/>
            <person name="Tang H."/>
            <person name="Wu W."/>
            <person name="Hao P."/>
            <person name="Wang L."/>
            <person name="Jiang B.-L."/>
            <person name="Zeng S."/>
            <person name="Gu W.-Y."/>
            <person name="Lu G."/>
            <person name="Rong L."/>
            <person name="Tian Y."/>
            <person name="Yao Z."/>
            <person name="Fu G."/>
            <person name="Chen B."/>
            <person name="Fang R."/>
            <person name="Qiang B."/>
            <person name="Chen Z."/>
            <person name="Zhao G.-P."/>
            <person name="Tang J.-L."/>
            <person name="He C."/>
        </authorList>
    </citation>
    <scope>NUCLEOTIDE SEQUENCE [LARGE SCALE GENOMIC DNA]</scope>
    <source>
        <strain>8004</strain>
    </source>
</reference>
<accession>Q4UZF3</accession>
<protein>
    <recommendedName>
        <fullName evidence="1">3-demethoxyubiquinol 3-hydroxylase</fullName>
        <shortName evidence="1">DMQ hydroxylase</shortName>
        <ecNumber evidence="1">1.14.99.60</ecNumber>
    </recommendedName>
    <alternativeName>
        <fullName evidence="1">2-nonaprenyl-3-methyl-6-methoxy-1,4-benzoquinol hydroxylase</fullName>
    </alternativeName>
</protein>
<sequence>MTQIPPSRLHSPLDRLLVEAQRALDTVFGNPPAERPNPAGDTPDAALAPAQRQHAAGLMRINHVGEVCAQGLYFGQAAVARDDHTRQHLLTAAQEETDHLAWCADRLRELESRPSLFNPLWYAGSYALGAVAGLRGDDWSLGFVVETERQVEAHLDEHLETLPETDQRSRAILRVMKIDEARHADHAEQAGARILPPPIPSAMALASKLMKTIAYRF</sequence>
<organism>
    <name type="scientific">Xanthomonas campestris pv. campestris (strain 8004)</name>
    <dbReference type="NCBI Taxonomy" id="314565"/>
    <lineage>
        <taxon>Bacteria</taxon>
        <taxon>Pseudomonadati</taxon>
        <taxon>Pseudomonadota</taxon>
        <taxon>Gammaproteobacteria</taxon>
        <taxon>Lysobacterales</taxon>
        <taxon>Lysobacteraceae</taxon>
        <taxon>Xanthomonas</taxon>
    </lineage>
</organism>
<keyword id="KW-1003">Cell membrane</keyword>
<keyword id="KW-0408">Iron</keyword>
<keyword id="KW-0472">Membrane</keyword>
<keyword id="KW-0479">Metal-binding</keyword>
<keyword id="KW-0503">Monooxygenase</keyword>
<keyword id="KW-0560">Oxidoreductase</keyword>
<keyword id="KW-0831">Ubiquinone biosynthesis</keyword>
<proteinExistence type="inferred from homology"/>
<name>COQ7_XANC8</name>